<protein>
    <recommendedName>
        <fullName evidence="1">Small ribosomal subunit protein bS20</fullName>
    </recommendedName>
    <alternativeName>
        <fullName evidence="3">30S ribosomal protein S20</fullName>
    </alternativeName>
</protein>
<accession>Q30ZR8</accession>
<evidence type="ECO:0000255" key="1">
    <source>
        <dbReference type="HAMAP-Rule" id="MF_00500"/>
    </source>
</evidence>
<evidence type="ECO:0000256" key="2">
    <source>
        <dbReference type="SAM" id="MobiDB-lite"/>
    </source>
</evidence>
<evidence type="ECO:0000305" key="3"/>
<gene>
    <name evidence="1" type="primary">rpsT</name>
    <name type="ordered locus">Dde_2031</name>
</gene>
<sequence>MANHKSAIKRHKQSVKRAARNRAVKTRIKNAIKAVRTAVTEKDKEQAQAKLTDAMSVLDKASSKGVIHWKNAARKISRLSKAVDGIE</sequence>
<keyword id="KW-1185">Reference proteome</keyword>
<keyword id="KW-0687">Ribonucleoprotein</keyword>
<keyword id="KW-0689">Ribosomal protein</keyword>
<keyword id="KW-0694">RNA-binding</keyword>
<keyword id="KW-0699">rRNA-binding</keyword>
<organism>
    <name type="scientific">Oleidesulfovibrio alaskensis (strain ATCC BAA-1058 / DSM 17464 / G20)</name>
    <name type="common">Desulfovibrio alaskensis</name>
    <dbReference type="NCBI Taxonomy" id="207559"/>
    <lineage>
        <taxon>Bacteria</taxon>
        <taxon>Pseudomonadati</taxon>
        <taxon>Thermodesulfobacteriota</taxon>
        <taxon>Desulfovibrionia</taxon>
        <taxon>Desulfovibrionales</taxon>
        <taxon>Desulfovibrionaceae</taxon>
        <taxon>Oleidesulfovibrio</taxon>
    </lineage>
</organism>
<reference key="1">
    <citation type="journal article" date="2011" name="J. Bacteriol.">
        <title>Complete genome sequence and updated annotation of Desulfovibrio alaskensis G20.</title>
        <authorList>
            <person name="Hauser L.J."/>
            <person name="Land M.L."/>
            <person name="Brown S.D."/>
            <person name="Larimer F."/>
            <person name="Keller K.L."/>
            <person name="Rapp-Giles B.J."/>
            <person name="Price M.N."/>
            <person name="Lin M."/>
            <person name="Bruce D.C."/>
            <person name="Detter J.C."/>
            <person name="Tapia R."/>
            <person name="Han C.S."/>
            <person name="Goodwin L.A."/>
            <person name="Cheng J.F."/>
            <person name="Pitluck S."/>
            <person name="Copeland A."/>
            <person name="Lucas S."/>
            <person name="Nolan M."/>
            <person name="Lapidus A.L."/>
            <person name="Palumbo A.V."/>
            <person name="Wall J.D."/>
        </authorList>
    </citation>
    <scope>NUCLEOTIDE SEQUENCE [LARGE SCALE GENOMIC DNA]</scope>
    <source>
        <strain>ATCC BAA-1058 / DSM 17464 / G20</strain>
    </source>
</reference>
<name>RS20_OLEA2</name>
<dbReference type="EMBL" id="CP000112">
    <property type="protein sequence ID" value="ABB38828.1"/>
    <property type="molecule type" value="Genomic_DNA"/>
</dbReference>
<dbReference type="RefSeq" id="WP_011367934.1">
    <property type="nucleotide sequence ID" value="NC_007519.1"/>
</dbReference>
<dbReference type="SMR" id="Q30ZR8"/>
<dbReference type="STRING" id="207559.Dde_2031"/>
<dbReference type="KEGG" id="dde:Dde_2031"/>
<dbReference type="eggNOG" id="COG0268">
    <property type="taxonomic scope" value="Bacteria"/>
</dbReference>
<dbReference type="HOGENOM" id="CLU_160655_3_1_7"/>
<dbReference type="Proteomes" id="UP000002710">
    <property type="component" value="Chromosome"/>
</dbReference>
<dbReference type="GO" id="GO:0005829">
    <property type="term" value="C:cytosol"/>
    <property type="evidence" value="ECO:0007669"/>
    <property type="project" value="TreeGrafter"/>
</dbReference>
<dbReference type="GO" id="GO:0015935">
    <property type="term" value="C:small ribosomal subunit"/>
    <property type="evidence" value="ECO:0007669"/>
    <property type="project" value="TreeGrafter"/>
</dbReference>
<dbReference type="GO" id="GO:0070181">
    <property type="term" value="F:small ribosomal subunit rRNA binding"/>
    <property type="evidence" value="ECO:0007669"/>
    <property type="project" value="TreeGrafter"/>
</dbReference>
<dbReference type="GO" id="GO:0003735">
    <property type="term" value="F:structural constituent of ribosome"/>
    <property type="evidence" value="ECO:0007669"/>
    <property type="project" value="InterPro"/>
</dbReference>
<dbReference type="GO" id="GO:0006412">
    <property type="term" value="P:translation"/>
    <property type="evidence" value="ECO:0007669"/>
    <property type="project" value="UniProtKB-UniRule"/>
</dbReference>
<dbReference type="FunFam" id="1.20.58.110:FF:000001">
    <property type="entry name" value="30S ribosomal protein S20"/>
    <property type="match status" value="1"/>
</dbReference>
<dbReference type="Gene3D" id="1.20.58.110">
    <property type="entry name" value="Ribosomal protein S20"/>
    <property type="match status" value="1"/>
</dbReference>
<dbReference type="HAMAP" id="MF_00500">
    <property type="entry name" value="Ribosomal_bS20"/>
    <property type="match status" value="1"/>
</dbReference>
<dbReference type="InterPro" id="IPR002583">
    <property type="entry name" value="Ribosomal_bS20"/>
</dbReference>
<dbReference type="InterPro" id="IPR036510">
    <property type="entry name" value="Ribosomal_bS20_sf"/>
</dbReference>
<dbReference type="NCBIfam" id="TIGR00029">
    <property type="entry name" value="S20"/>
    <property type="match status" value="1"/>
</dbReference>
<dbReference type="PANTHER" id="PTHR33398">
    <property type="entry name" value="30S RIBOSOMAL PROTEIN S20"/>
    <property type="match status" value="1"/>
</dbReference>
<dbReference type="PANTHER" id="PTHR33398:SF1">
    <property type="entry name" value="SMALL RIBOSOMAL SUBUNIT PROTEIN BS20C"/>
    <property type="match status" value="1"/>
</dbReference>
<dbReference type="Pfam" id="PF01649">
    <property type="entry name" value="Ribosomal_S20p"/>
    <property type="match status" value="1"/>
</dbReference>
<dbReference type="SUPFAM" id="SSF46992">
    <property type="entry name" value="Ribosomal protein S20"/>
    <property type="match status" value="1"/>
</dbReference>
<proteinExistence type="inferred from homology"/>
<feature type="chain" id="PRO_0000236432" description="Small ribosomal subunit protein bS20">
    <location>
        <begin position="1"/>
        <end position="87"/>
    </location>
</feature>
<feature type="region of interest" description="Disordered" evidence="2">
    <location>
        <begin position="1"/>
        <end position="23"/>
    </location>
</feature>
<comment type="function">
    <text evidence="1">Binds directly to 16S ribosomal RNA.</text>
</comment>
<comment type="similarity">
    <text evidence="1">Belongs to the bacterial ribosomal protein bS20 family.</text>
</comment>